<keyword id="KW-0007">Acetylation</keyword>
<keyword id="KW-0539">Nucleus</keyword>
<keyword id="KW-1185">Reference proteome</keyword>
<organism>
    <name type="scientific">Rattus norvegicus</name>
    <name type="common">Rat</name>
    <dbReference type="NCBI Taxonomy" id="10116"/>
    <lineage>
        <taxon>Eukaryota</taxon>
        <taxon>Metazoa</taxon>
        <taxon>Chordata</taxon>
        <taxon>Craniata</taxon>
        <taxon>Vertebrata</taxon>
        <taxon>Euteleostomi</taxon>
        <taxon>Mammalia</taxon>
        <taxon>Eutheria</taxon>
        <taxon>Euarchontoglires</taxon>
        <taxon>Glires</taxon>
        <taxon>Rodentia</taxon>
        <taxon>Myomorpha</taxon>
        <taxon>Muroidea</taxon>
        <taxon>Muridae</taxon>
        <taxon>Murinae</taxon>
        <taxon>Rattus</taxon>
    </lineage>
</organism>
<proteinExistence type="evidence at transcript level"/>
<gene>
    <name type="primary">Tceanc2</name>
</gene>
<reference key="1">
    <citation type="journal article" date="2004" name="Genome Res.">
        <title>The status, quality, and expansion of the NIH full-length cDNA project: the Mammalian Gene Collection (MGC).</title>
        <authorList>
            <consortium name="The MGC Project Team"/>
        </authorList>
    </citation>
    <scope>NUCLEOTIDE SEQUENCE [LARGE SCALE MRNA]</scope>
    <source>
        <tissue>Heart</tissue>
    </source>
</reference>
<sequence length="207" mass="24299">MDKFVIRTPRIQNSPKKKLKEKVYKQATIESLKRVVVIEDIKRWKTVLELPEQTKENLVAALQELKKKIPSREVLRSTRIGHAVNKVRRHSDPEVAGLAKEVYTEWKTFIENHLDRPSIEVHSDPKTESFRKNAQKLLSEALELKMDHLLVENIERETFHLCSRLINRPYRRTVRALVFTLKHRAEIREQVKSGTLPVGTFVQTHKK</sequence>
<dbReference type="EMBL" id="BC083757">
    <property type="protein sequence ID" value="AAH83757.1"/>
    <property type="molecule type" value="mRNA"/>
</dbReference>
<dbReference type="RefSeq" id="NP_001014282.1">
    <property type="nucleotide sequence ID" value="NM_001014260.2"/>
</dbReference>
<dbReference type="RefSeq" id="XP_038966389.1">
    <property type="nucleotide sequence ID" value="XM_039110461.2"/>
</dbReference>
<dbReference type="SMR" id="Q5XIC7"/>
<dbReference type="FunCoup" id="Q5XIC7">
    <property type="interactions" value="2344"/>
</dbReference>
<dbReference type="STRING" id="10116.ENSRNOP00000049524"/>
<dbReference type="iPTMnet" id="Q5XIC7"/>
<dbReference type="PhosphoSitePlus" id="Q5XIC7"/>
<dbReference type="PaxDb" id="10116-ENSRNOP00000049524"/>
<dbReference type="DNASU" id="366431"/>
<dbReference type="Ensembl" id="ENSRNOT00000048784.4">
    <property type="protein sequence ID" value="ENSRNOP00000049524.3"/>
    <property type="gene ID" value="ENSRNOG00000009398.7"/>
</dbReference>
<dbReference type="GeneID" id="366431"/>
<dbReference type="KEGG" id="rno:366431"/>
<dbReference type="UCSC" id="RGD:1359481">
    <property type="organism name" value="rat"/>
</dbReference>
<dbReference type="AGR" id="RGD:1359481"/>
<dbReference type="CTD" id="127428"/>
<dbReference type="RGD" id="1359481">
    <property type="gene designation" value="Tceanc2"/>
</dbReference>
<dbReference type="eggNOG" id="KOG1105">
    <property type="taxonomic scope" value="Eukaryota"/>
</dbReference>
<dbReference type="GeneTree" id="ENSGT00390000014384"/>
<dbReference type="HOGENOM" id="CLU_086873_0_0_1"/>
<dbReference type="InParanoid" id="Q5XIC7"/>
<dbReference type="OMA" id="QPKENLM"/>
<dbReference type="OrthoDB" id="44867at2759"/>
<dbReference type="PhylomeDB" id="Q5XIC7"/>
<dbReference type="PRO" id="PR:Q5XIC7"/>
<dbReference type="Proteomes" id="UP000002494">
    <property type="component" value="Chromosome 5"/>
</dbReference>
<dbReference type="Bgee" id="ENSRNOG00000009398">
    <property type="expression patterns" value="Expressed in testis and 19 other cell types or tissues"/>
</dbReference>
<dbReference type="GO" id="GO:0005634">
    <property type="term" value="C:nucleus"/>
    <property type="evidence" value="ECO:0000318"/>
    <property type="project" value="GO_Central"/>
</dbReference>
<dbReference type="GO" id="GO:0006351">
    <property type="term" value="P:DNA-templated transcription"/>
    <property type="evidence" value="ECO:0007669"/>
    <property type="project" value="InterPro"/>
</dbReference>
<dbReference type="GO" id="GO:0006357">
    <property type="term" value="P:regulation of transcription by RNA polymerase II"/>
    <property type="evidence" value="ECO:0000318"/>
    <property type="project" value="GO_Central"/>
</dbReference>
<dbReference type="CDD" id="cd00183">
    <property type="entry name" value="TFIIS_I"/>
    <property type="match status" value="1"/>
</dbReference>
<dbReference type="Gene3D" id="1.20.930.10">
    <property type="entry name" value="Conserved domain common to transcription factors TFIIS, elongin A, CRSP70"/>
    <property type="match status" value="1"/>
</dbReference>
<dbReference type="Gene3D" id="1.10.472.30">
    <property type="entry name" value="Transcription elongation factor S-II, central domain"/>
    <property type="match status" value="1"/>
</dbReference>
<dbReference type="InterPro" id="IPR003617">
    <property type="entry name" value="TFIIS/CRSP70_N_sub"/>
</dbReference>
<dbReference type="InterPro" id="IPR035441">
    <property type="entry name" value="TFIIS/LEDGF_dom_sf"/>
</dbReference>
<dbReference type="InterPro" id="IPR003618">
    <property type="entry name" value="TFIIS_cen_dom"/>
</dbReference>
<dbReference type="InterPro" id="IPR036575">
    <property type="entry name" value="TFIIS_cen_dom_sf"/>
</dbReference>
<dbReference type="InterPro" id="IPR017923">
    <property type="entry name" value="TFIIS_N"/>
</dbReference>
<dbReference type="PANTHER" id="PTHR11477:SF14">
    <property type="entry name" value="TRANSCRIPTION ELONGATION FACTOR A N-TERMINAL AND CENTRAL DOMAIN-CONTAINING PROTEIN 2"/>
    <property type="match status" value="1"/>
</dbReference>
<dbReference type="PANTHER" id="PTHR11477">
    <property type="entry name" value="TRANSCRIPTION FACTOR S-II ZINC FINGER DOMAIN-CONTAINING PROTEIN"/>
    <property type="match status" value="1"/>
</dbReference>
<dbReference type="Pfam" id="PF08711">
    <property type="entry name" value="Med26"/>
    <property type="match status" value="1"/>
</dbReference>
<dbReference type="SMART" id="SM00509">
    <property type="entry name" value="TFS2N"/>
    <property type="match status" value="1"/>
</dbReference>
<dbReference type="SUPFAM" id="SSF47676">
    <property type="entry name" value="Conserved domain common to transcription factors TFIIS, elongin A, CRSP70"/>
    <property type="match status" value="1"/>
</dbReference>
<dbReference type="SUPFAM" id="SSF46942">
    <property type="entry name" value="Elongation factor TFIIS domain 2"/>
    <property type="match status" value="1"/>
</dbReference>
<dbReference type="PROSITE" id="PS51321">
    <property type="entry name" value="TFIIS_CENTRAL"/>
    <property type="match status" value="1"/>
</dbReference>
<dbReference type="PROSITE" id="PS51319">
    <property type="entry name" value="TFIIS_N"/>
    <property type="match status" value="1"/>
</dbReference>
<evidence type="ECO:0000250" key="1">
    <source>
        <dbReference type="UniProtKB" id="Q96MN5"/>
    </source>
</evidence>
<evidence type="ECO:0000255" key="2">
    <source>
        <dbReference type="PROSITE-ProRule" id="PRU00649"/>
    </source>
</evidence>
<evidence type="ECO:0000255" key="3">
    <source>
        <dbReference type="PROSITE-ProRule" id="PRU00651"/>
    </source>
</evidence>
<evidence type="ECO:0000305" key="4"/>
<protein>
    <recommendedName>
        <fullName>Transcription elongation factor A N-terminal and central domain-containing protein 2</fullName>
    </recommendedName>
</protein>
<accession>Q5XIC7</accession>
<name>TEAN2_RAT</name>
<comment type="subcellular location">
    <subcellularLocation>
        <location evidence="2 3">Nucleus</location>
    </subcellularLocation>
</comment>
<comment type="similarity">
    <text evidence="4">Belongs to the TCEANC2 family.</text>
</comment>
<feature type="chain" id="PRO_0000286576" description="Transcription elongation factor A N-terminal and central domain-containing protein 2">
    <location>
        <begin position="1"/>
        <end position="207"/>
    </location>
</feature>
<feature type="domain" description="TFIIS N-terminal" evidence="2">
    <location>
        <begin position="39"/>
        <end position="113"/>
    </location>
</feature>
<feature type="domain" description="TFIIS central" evidence="3">
    <location>
        <begin position="130"/>
        <end position="207"/>
    </location>
</feature>
<feature type="modified residue" description="N-acetylmethionine" evidence="1">
    <location>
        <position position="1"/>
    </location>
</feature>